<keyword id="KW-1185">Reference proteome</keyword>
<keyword id="KW-0687">Ribonucleoprotein</keyword>
<keyword id="KW-0689">Ribosomal protein</keyword>
<accession>B5ZRX6</accession>
<feature type="chain" id="PRO_1000121677" description="Large ribosomal subunit protein bL28">
    <location>
        <begin position="1"/>
        <end position="99"/>
    </location>
</feature>
<reference key="1">
    <citation type="journal article" date="2010" name="Stand. Genomic Sci.">
        <title>Complete genome sequence of Rhizobium leguminosarum bv trifolii strain WSM2304, an effective microsymbiont of the South American clover Trifolium polymorphum.</title>
        <authorList>
            <person name="Reeve W."/>
            <person name="O'Hara G."/>
            <person name="Chain P."/>
            <person name="Ardley J."/>
            <person name="Brau L."/>
            <person name="Nandesena K."/>
            <person name="Tiwari R."/>
            <person name="Malfatti S."/>
            <person name="Kiss H."/>
            <person name="Lapidus A."/>
            <person name="Copeland A."/>
            <person name="Nolan M."/>
            <person name="Land M."/>
            <person name="Ivanova N."/>
            <person name="Mavromatis K."/>
            <person name="Markowitz V."/>
            <person name="Kyrpides N."/>
            <person name="Melino V."/>
            <person name="Denton M."/>
            <person name="Yates R."/>
            <person name="Howieson J."/>
        </authorList>
    </citation>
    <scope>NUCLEOTIDE SEQUENCE [LARGE SCALE GENOMIC DNA]</scope>
    <source>
        <strain>WSM2304</strain>
    </source>
</reference>
<comment type="similarity">
    <text evidence="1">Belongs to the bacterial ribosomal protein bL28 family.</text>
</comment>
<gene>
    <name evidence="1" type="primary">rpmB</name>
    <name type="ordered locus">Rleg2_3586</name>
</gene>
<sequence>MSRVCELTGKAVLTGNNVSHANNKTKRRFLPNLCQVTLISDALNQRYRLRVSAAALRSVEHRGGLDAFLLKASETELSMRARLLRRQIVKKTAEAAVAA</sequence>
<name>RL28_RHILW</name>
<dbReference type="EMBL" id="CP001191">
    <property type="protein sequence ID" value="ACI56853.1"/>
    <property type="molecule type" value="Genomic_DNA"/>
</dbReference>
<dbReference type="RefSeq" id="WP_003589938.1">
    <property type="nucleotide sequence ID" value="NC_011369.1"/>
</dbReference>
<dbReference type="SMR" id="B5ZRX6"/>
<dbReference type="STRING" id="395492.Rleg2_3586"/>
<dbReference type="KEGG" id="rlt:Rleg2_3586"/>
<dbReference type="eggNOG" id="COG0227">
    <property type="taxonomic scope" value="Bacteria"/>
</dbReference>
<dbReference type="HOGENOM" id="CLU_064548_4_2_5"/>
<dbReference type="Proteomes" id="UP000008330">
    <property type="component" value="Chromosome"/>
</dbReference>
<dbReference type="GO" id="GO:0022625">
    <property type="term" value="C:cytosolic large ribosomal subunit"/>
    <property type="evidence" value="ECO:0007669"/>
    <property type="project" value="TreeGrafter"/>
</dbReference>
<dbReference type="GO" id="GO:0003735">
    <property type="term" value="F:structural constituent of ribosome"/>
    <property type="evidence" value="ECO:0007669"/>
    <property type="project" value="InterPro"/>
</dbReference>
<dbReference type="GO" id="GO:0006412">
    <property type="term" value="P:translation"/>
    <property type="evidence" value="ECO:0007669"/>
    <property type="project" value="UniProtKB-UniRule"/>
</dbReference>
<dbReference type="Gene3D" id="2.30.170.40">
    <property type="entry name" value="Ribosomal protein L28/L24"/>
    <property type="match status" value="1"/>
</dbReference>
<dbReference type="HAMAP" id="MF_00373">
    <property type="entry name" value="Ribosomal_bL28"/>
    <property type="match status" value="1"/>
</dbReference>
<dbReference type="InterPro" id="IPR026569">
    <property type="entry name" value="Ribosomal_bL28"/>
</dbReference>
<dbReference type="InterPro" id="IPR034704">
    <property type="entry name" value="Ribosomal_bL28/bL31-like_sf"/>
</dbReference>
<dbReference type="InterPro" id="IPR001383">
    <property type="entry name" value="Ribosomal_bL28_bact-type"/>
</dbReference>
<dbReference type="InterPro" id="IPR037147">
    <property type="entry name" value="Ribosomal_bL28_sf"/>
</dbReference>
<dbReference type="NCBIfam" id="TIGR00009">
    <property type="entry name" value="L28"/>
    <property type="match status" value="1"/>
</dbReference>
<dbReference type="PANTHER" id="PTHR13528">
    <property type="entry name" value="39S RIBOSOMAL PROTEIN L28, MITOCHONDRIAL"/>
    <property type="match status" value="1"/>
</dbReference>
<dbReference type="PANTHER" id="PTHR13528:SF2">
    <property type="entry name" value="LARGE RIBOSOMAL SUBUNIT PROTEIN BL28M"/>
    <property type="match status" value="1"/>
</dbReference>
<dbReference type="Pfam" id="PF00830">
    <property type="entry name" value="Ribosomal_L28"/>
    <property type="match status" value="1"/>
</dbReference>
<dbReference type="SUPFAM" id="SSF143800">
    <property type="entry name" value="L28p-like"/>
    <property type="match status" value="1"/>
</dbReference>
<proteinExistence type="inferred from homology"/>
<evidence type="ECO:0000255" key="1">
    <source>
        <dbReference type="HAMAP-Rule" id="MF_00373"/>
    </source>
</evidence>
<evidence type="ECO:0000305" key="2"/>
<organism>
    <name type="scientific">Rhizobium leguminosarum bv. trifolii (strain WSM2304)</name>
    <dbReference type="NCBI Taxonomy" id="395492"/>
    <lineage>
        <taxon>Bacteria</taxon>
        <taxon>Pseudomonadati</taxon>
        <taxon>Pseudomonadota</taxon>
        <taxon>Alphaproteobacteria</taxon>
        <taxon>Hyphomicrobiales</taxon>
        <taxon>Rhizobiaceae</taxon>
        <taxon>Rhizobium/Agrobacterium group</taxon>
        <taxon>Rhizobium</taxon>
    </lineage>
</organism>
<protein>
    <recommendedName>
        <fullName evidence="1">Large ribosomal subunit protein bL28</fullName>
    </recommendedName>
    <alternativeName>
        <fullName evidence="2">50S ribosomal protein L28</fullName>
    </alternativeName>
</protein>